<sequence>MNTTPDTPTPRALRELTPLEARILGVLVEKQHTVPDTYPLSLNALTAGCNQKTARAPVMNVTDDEVTTALDALKHLSLVFEGSSSRVPRFEHNLNRVLGIPSQAIALLTVLMLRGPQTAAELRLNSARLHGFADISSVEAFLDELATREPPLVVRLPRAPGARENRWMHLLCGDVNVGEFAGADGGGAEAVAPSEFEALKAEQKRLADEVARLNALVRRMASELGIDADAPGDAN</sequence>
<accession>A9AL79</accession>
<proteinExistence type="inferred from homology"/>
<keyword id="KW-1185">Reference proteome</keyword>
<reference key="1">
    <citation type="submission" date="2007-10" db="EMBL/GenBank/DDBJ databases">
        <title>Complete sequence of chromosome 2 of Burkholderia multivorans ATCC 17616.</title>
        <authorList>
            <person name="Copeland A."/>
            <person name="Lucas S."/>
            <person name="Lapidus A."/>
            <person name="Barry K."/>
            <person name="Glavina del Rio T."/>
            <person name="Dalin E."/>
            <person name="Tice H."/>
            <person name="Pitluck S."/>
            <person name="Chain P."/>
            <person name="Malfatti S."/>
            <person name="Shin M."/>
            <person name="Vergez L."/>
            <person name="Schmutz J."/>
            <person name="Larimer F."/>
            <person name="Land M."/>
            <person name="Hauser L."/>
            <person name="Kyrpides N."/>
            <person name="Kim E."/>
            <person name="Tiedje J."/>
            <person name="Richardson P."/>
        </authorList>
    </citation>
    <scope>NUCLEOTIDE SEQUENCE [LARGE SCALE GENOMIC DNA]</scope>
    <source>
        <strain>ATCC 17616 / 249</strain>
    </source>
</reference>
<reference key="2">
    <citation type="submission" date="2007-04" db="EMBL/GenBank/DDBJ databases">
        <title>Complete genome sequence of Burkholderia multivorans ATCC 17616.</title>
        <authorList>
            <person name="Ohtsubo Y."/>
            <person name="Yamashita A."/>
            <person name="Kurokawa K."/>
            <person name="Takami H."/>
            <person name="Yuhara S."/>
            <person name="Nishiyama E."/>
            <person name="Endo R."/>
            <person name="Miyazaki R."/>
            <person name="Ono A."/>
            <person name="Yano K."/>
            <person name="Ito M."/>
            <person name="Sota M."/>
            <person name="Yuji N."/>
            <person name="Hattori M."/>
            <person name="Tsuda M."/>
        </authorList>
    </citation>
    <scope>NUCLEOTIDE SEQUENCE [LARGE SCALE GENOMIC DNA]</scope>
    <source>
        <strain>ATCC 17616 / 249</strain>
    </source>
</reference>
<dbReference type="EMBL" id="CP000869">
    <property type="protein sequence ID" value="ABX16915.1"/>
    <property type="molecule type" value="Genomic_DNA"/>
</dbReference>
<dbReference type="EMBL" id="AP009386">
    <property type="protein sequence ID" value="BAG47131.1"/>
    <property type="molecule type" value="Genomic_DNA"/>
</dbReference>
<dbReference type="RefSeq" id="WP_006397469.1">
    <property type="nucleotide sequence ID" value="NC_010805.1"/>
</dbReference>
<dbReference type="SMR" id="A9AL79"/>
<dbReference type="STRING" id="395019.BMULJ_05293"/>
<dbReference type="KEGG" id="bmj:BMULJ_05293"/>
<dbReference type="KEGG" id="bmu:Bmul_3231"/>
<dbReference type="eggNOG" id="COG3132">
    <property type="taxonomic scope" value="Bacteria"/>
</dbReference>
<dbReference type="HOGENOM" id="CLU_057831_0_0_4"/>
<dbReference type="Proteomes" id="UP000008815">
    <property type="component" value="Chromosome 2"/>
</dbReference>
<dbReference type="Gene3D" id="1.10.10.10">
    <property type="entry name" value="Winged helix-like DNA-binding domain superfamily/Winged helix DNA-binding domain"/>
    <property type="match status" value="2"/>
</dbReference>
<dbReference type="HAMAP" id="MF_01584">
    <property type="entry name" value="UPF0502"/>
    <property type="match status" value="1"/>
</dbReference>
<dbReference type="InterPro" id="IPR007432">
    <property type="entry name" value="DUF480"/>
</dbReference>
<dbReference type="InterPro" id="IPR036388">
    <property type="entry name" value="WH-like_DNA-bd_sf"/>
</dbReference>
<dbReference type="InterPro" id="IPR036390">
    <property type="entry name" value="WH_DNA-bd_sf"/>
</dbReference>
<dbReference type="PANTHER" id="PTHR38768">
    <property type="entry name" value="UPF0502 PROTEIN YCEH"/>
    <property type="match status" value="1"/>
</dbReference>
<dbReference type="PANTHER" id="PTHR38768:SF1">
    <property type="entry name" value="UPF0502 PROTEIN YCEH"/>
    <property type="match status" value="1"/>
</dbReference>
<dbReference type="Pfam" id="PF04337">
    <property type="entry name" value="DUF480"/>
    <property type="match status" value="1"/>
</dbReference>
<dbReference type="SUPFAM" id="SSF46785">
    <property type="entry name" value="Winged helix' DNA-binding domain"/>
    <property type="match status" value="2"/>
</dbReference>
<comment type="similarity">
    <text evidence="1">Belongs to the UPF0502 family.</text>
</comment>
<evidence type="ECO:0000255" key="1">
    <source>
        <dbReference type="HAMAP-Rule" id="MF_01584"/>
    </source>
</evidence>
<feature type="chain" id="PRO_1000201235" description="UPF0502 protein Bmul_3231/BMULJ_05293">
    <location>
        <begin position="1"/>
        <end position="235"/>
    </location>
</feature>
<protein>
    <recommendedName>
        <fullName evidence="1">UPF0502 protein Bmul_3231/BMULJ_05293</fullName>
    </recommendedName>
</protein>
<name>Y5293_BURM1</name>
<gene>
    <name type="ordered locus">Bmul_3231</name>
    <name type="ordered locus">BMULJ_05293</name>
</gene>
<organism>
    <name type="scientific">Burkholderia multivorans (strain ATCC 17616 / 249)</name>
    <dbReference type="NCBI Taxonomy" id="395019"/>
    <lineage>
        <taxon>Bacteria</taxon>
        <taxon>Pseudomonadati</taxon>
        <taxon>Pseudomonadota</taxon>
        <taxon>Betaproteobacteria</taxon>
        <taxon>Burkholderiales</taxon>
        <taxon>Burkholderiaceae</taxon>
        <taxon>Burkholderia</taxon>
        <taxon>Burkholderia cepacia complex</taxon>
    </lineage>
</organism>